<dbReference type="EC" id="7.-.-.-" evidence="1"/>
<dbReference type="EMBL" id="CP000606">
    <property type="protein sequence ID" value="ABO23932.1"/>
    <property type="molecule type" value="Genomic_DNA"/>
</dbReference>
<dbReference type="SMR" id="A3QEN4"/>
<dbReference type="STRING" id="323850.Shew_2066"/>
<dbReference type="KEGG" id="slo:Shew_2066"/>
<dbReference type="eggNOG" id="COG4657">
    <property type="taxonomic scope" value="Bacteria"/>
</dbReference>
<dbReference type="HOGENOM" id="CLU_095255_1_0_6"/>
<dbReference type="OrthoDB" id="9803631at2"/>
<dbReference type="Proteomes" id="UP000001558">
    <property type="component" value="Chromosome"/>
</dbReference>
<dbReference type="GO" id="GO:0005886">
    <property type="term" value="C:plasma membrane"/>
    <property type="evidence" value="ECO:0007669"/>
    <property type="project" value="UniProtKB-SubCell"/>
</dbReference>
<dbReference type="GO" id="GO:0022900">
    <property type="term" value="P:electron transport chain"/>
    <property type="evidence" value="ECO:0007669"/>
    <property type="project" value="UniProtKB-UniRule"/>
</dbReference>
<dbReference type="HAMAP" id="MF_00459">
    <property type="entry name" value="RsxA_RnfA"/>
    <property type="match status" value="1"/>
</dbReference>
<dbReference type="InterPro" id="IPR011293">
    <property type="entry name" value="Ion_transpt_RnfA/RsxA"/>
</dbReference>
<dbReference type="InterPro" id="IPR003667">
    <property type="entry name" value="NqrDE/RnfAE"/>
</dbReference>
<dbReference type="InterPro" id="IPR050133">
    <property type="entry name" value="NqrDE/RnfAE_oxidrdctase"/>
</dbReference>
<dbReference type="NCBIfam" id="NF003481">
    <property type="entry name" value="PRK05151.1"/>
    <property type="match status" value="1"/>
</dbReference>
<dbReference type="NCBIfam" id="TIGR01943">
    <property type="entry name" value="rnfA"/>
    <property type="match status" value="1"/>
</dbReference>
<dbReference type="PANTHER" id="PTHR30335">
    <property type="entry name" value="INTEGRAL MEMBRANE PROTEIN OF SOXR-REDUCING COMPLEX"/>
    <property type="match status" value="1"/>
</dbReference>
<dbReference type="PANTHER" id="PTHR30335:SF0">
    <property type="entry name" value="ION-TRANSLOCATING OXIDOREDUCTASE COMPLEX SUBUNIT A"/>
    <property type="match status" value="1"/>
</dbReference>
<dbReference type="Pfam" id="PF02508">
    <property type="entry name" value="Rnf-Nqr"/>
    <property type="match status" value="1"/>
</dbReference>
<dbReference type="PIRSF" id="PIRSF006102">
    <property type="entry name" value="NQR_DE"/>
    <property type="match status" value="1"/>
</dbReference>
<keyword id="KW-0997">Cell inner membrane</keyword>
<keyword id="KW-1003">Cell membrane</keyword>
<keyword id="KW-0249">Electron transport</keyword>
<keyword id="KW-0472">Membrane</keyword>
<keyword id="KW-1185">Reference proteome</keyword>
<keyword id="KW-1278">Translocase</keyword>
<keyword id="KW-0812">Transmembrane</keyword>
<keyword id="KW-1133">Transmembrane helix</keyword>
<keyword id="KW-0813">Transport</keyword>
<comment type="function">
    <text evidence="1">Part of a membrane-bound complex that couples electron transfer with translocation of ions across the membrane.</text>
</comment>
<comment type="subunit">
    <text evidence="1">The complex is composed of six subunits: RnfA, RnfB, RnfC, RnfD, RnfE and RnfG.</text>
</comment>
<comment type="subcellular location">
    <subcellularLocation>
        <location evidence="1">Cell inner membrane</location>
        <topology evidence="1">Multi-pass membrane protein</topology>
    </subcellularLocation>
</comment>
<comment type="similarity">
    <text evidence="1">Belongs to the NqrDE/RnfAE family.</text>
</comment>
<evidence type="ECO:0000255" key="1">
    <source>
        <dbReference type="HAMAP-Rule" id="MF_00459"/>
    </source>
</evidence>
<organism>
    <name type="scientific">Shewanella loihica (strain ATCC BAA-1088 / PV-4)</name>
    <dbReference type="NCBI Taxonomy" id="323850"/>
    <lineage>
        <taxon>Bacteria</taxon>
        <taxon>Pseudomonadati</taxon>
        <taxon>Pseudomonadota</taxon>
        <taxon>Gammaproteobacteria</taxon>
        <taxon>Alteromonadales</taxon>
        <taxon>Shewanellaceae</taxon>
        <taxon>Shewanella</taxon>
    </lineage>
</organism>
<accession>A3QEN4</accession>
<name>RNFA_SHELP</name>
<sequence length="192" mass="20548">MSEYLLLLVGTVLVNNFVLVKFLGLCPFMGVSSKLESAIGMSMATTFVLTLASILSYLVDTYLLTPFDLSYLRTMAFILVIAVVVQFTEMLVQKTSAALHRALGIYLPLITTNCAVLGVALLNVNEKHDFIESAIYGFGAAVGFSIVLILFSAMRERLAAADVPAPFKGGAIAMITAGLMSLAFMGFTGLVN</sequence>
<gene>
    <name evidence="1" type="primary">rnfA</name>
    <name type="ordered locus">Shew_2066</name>
</gene>
<reference key="1">
    <citation type="submission" date="2007-03" db="EMBL/GenBank/DDBJ databases">
        <title>Complete sequence of Shewanella loihica PV-4.</title>
        <authorList>
            <consortium name="US DOE Joint Genome Institute"/>
            <person name="Copeland A."/>
            <person name="Lucas S."/>
            <person name="Lapidus A."/>
            <person name="Barry K."/>
            <person name="Detter J.C."/>
            <person name="Glavina del Rio T."/>
            <person name="Hammon N."/>
            <person name="Israni S."/>
            <person name="Dalin E."/>
            <person name="Tice H."/>
            <person name="Pitluck S."/>
            <person name="Chain P."/>
            <person name="Malfatti S."/>
            <person name="Shin M."/>
            <person name="Vergez L."/>
            <person name="Schmutz J."/>
            <person name="Larimer F."/>
            <person name="Land M."/>
            <person name="Hauser L."/>
            <person name="Kyrpides N."/>
            <person name="Mikhailova N."/>
            <person name="Romine M.F."/>
            <person name="Serres G."/>
            <person name="Fredrickson J."/>
            <person name="Tiedje J."/>
            <person name="Richardson P."/>
        </authorList>
    </citation>
    <scope>NUCLEOTIDE SEQUENCE [LARGE SCALE GENOMIC DNA]</scope>
    <source>
        <strain>ATCC BAA-1088 / PV-4</strain>
    </source>
</reference>
<feature type="chain" id="PRO_1000013549" description="Ion-translocating oxidoreductase complex subunit A">
    <location>
        <begin position="1"/>
        <end position="192"/>
    </location>
</feature>
<feature type="transmembrane region" description="Helical" evidence="1">
    <location>
        <begin position="5"/>
        <end position="25"/>
    </location>
</feature>
<feature type="transmembrane region" description="Helical" evidence="1">
    <location>
        <begin position="39"/>
        <end position="59"/>
    </location>
</feature>
<feature type="transmembrane region" description="Helical" evidence="1">
    <location>
        <begin position="72"/>
        <end position="92"/>
    </location>
</feature>
<feature type="transmembrane region" description="Helical" evidence="1">
    <location>
        <begin position="102"/>
        <end position="122"/>
    </location>
</feature>
<feature type="transmembrane region" description="Helical" evidence="1">
    <location>
        <begin position="134"/>
        <end position="154"/>
    </location>
</feature>
<feature type="transmembrane region" description="Helical" evidence="1">
    <location>
        <begin position="171"/>
        <end position="191"/>
    </location>
</feature>
<proteinExistence type="inferred from homology"/>
<protein>
    <recommendedName>
        <fullName evidence="1">Ion-translocating oxidoreductase complex subunit A</fullName>
        <ecNumber evidence="1">7.-.-.-</ecNumber>
    </recommendedName>
    <alternativeName>
        <fullName evidence="1">Rnf electron transport complex subunit A</fullName>
    </alternativeName>
</protein>